<reference key="1">
    <citation type="journal article" date="2005" name="Science">
        <title>Life at depth: Photobacterium profundum genome sequence and expression analysis.</title>
        <authorList>
            <person name="Vezzi A."/>
            <person name="Campanaro S."/>
            <person name="D'Angelo M."/>
            <person name="Simonato F."/>
            <person name="Vitulo N."/>
            <person name="Lauro F.M."/>
            <person name="Cestaro A."/>
            <person name="Malacrida G."/>
            <person name="Simionati B."/>
            <person name="Cannata N."/>
            <person name="Romualdi C."/>
            <person name="Bartlett D.H."/>
            <person name="Valle G."/>
        </authorList>
    </citation>
    <scope>NUCLEOTIDE SEQUENCE [LARGE SCALE GENOMIC DNA]</scope>
    <source>
        <strain>ATCC BAA-1253 / SS9</strain>
    </source>
</reference>
<keyword id="KW-0169">Cobalamin biosynthesis</keyword>
<keyword id="KW-0328">Glycosyltransferase</keyword>
<keyword id="KW-1185">Reference proteome</keyword>
<keyword id="KW-0808">Transferase</keyword>
<gene>
    <name evidence="1" type="primary">cobT</name>
    <name type="ordered locus">PBPRA1182</name>
</gene>
<name>COBT_PHOPR</name>
<evidence type="ECO:0000255" key="1">
    <source>
        <dbReference type="HAMAP-Rule" id="MF_00230"/>
    </source>
</evidence>
<feature type="chain" id="PRO_1000021610" description="Nicotinate-nucleotide--dimethylbenzimidazole phosphoribosyltransferase">
    <location>
        <begin position="1"/>
        <end position="342"/>
    </location>
</feature>
<feature type="active site" description="Proton acceptor" evidence="1">
    <location>
        <position position="311"/>
    </location>
</feature>
<protein>
    <recommendedName>
        <fullName evidence="1">Nicotinate-nucleotide--dimethylbenzimidazole phosphoribosyltransferase</fullName>
        <shortName evidence="1">NN:DBI PRT</shortName>
        <ecNumber evidence="1">2.4.2.21</ecNumber>
    </recommendedName>
    <alternativeName>
        <fullName evidence="1">N(1)-alpha-phosphoribosyltransferase</fullName>
    </alternativeName>
</protein>
<sequence length="342" mass="36493">MFTITQPDTQPSDHIQHKIDNKTKPLGALGQLEAVALQLALIQQTEKIEIRHPHLLVFAGDHGIAQHSLSIAPSEVTAQMVANFLAGGAAINCFCRTNDMALKVIDAGIKVEPEDHPNLIKQRLGHGTEDFSQYAAMTDNTVLQALEYGANVVEVLNQQSCNLVGFGEMGIGNTSSAAAIMAALLNIPADECVGRGTGIDDQQLQRKVDLITQALDLHAEQLSDPLSILASVGGFEIAQIVGGMLKAAENKMTVLVDGFISTAAAMLAVSMHPEANHYFIYCHCSDESGHQRMLQHLNATPLLSLGLRLGEGTGAALALPLLRSACCFYNEMASFEDAGVTV</sequence>
<accession>Q6LSY3</accession>
<organism>
    <name type="scientific">Photobacterium profundum (strain SS9)</name>
    <dbReference type="NCBI Taxonomy" id="298386"/>
    <lineage>
        <taxon>Bacteria</taxon>
        <taxon>Pseudomonadati</taxon>
        <taxon>Pseudomonadota</taxon>
        <taxon>Gammaproteobacteria</taxon>
        <taxon>Vibrionales</taxon>
        <taxon>Vibrionaceae</taxon>
        <taxon>Photobacterium</taxon>
    </lineage>
</organism>
<dbReference type="EC" id="2.4.2.21" evidence="1"/>
<dbReference type="EMBL" id="CR378666">
    <property type="protein sequence ID" value="CAG19593.1"/>
    <property type="molecule type" value="Genomic_DNA"/>
</dbReference>
<dbReference type="RefSeq" id="WP_011217924.1">
    <property type="nucleotide sequence ID" value="NC_006370.1"/>
</dbReference>
<dbReference type="SMR" id="Q6LSY3"/>
<dbReference type="STRING" id="298386.PBPRA1182"/>
<dbReference type="KEGG" id="ppr:PBPRA1182"/>
<dbReference type="eggNOG" id="COG2038">
    <property type="taxonomic scope" value="Bacteria"/>
</dbReference>
<dbReference type="HOGENOM" id="CLU_002982_0_0_6"/>
<dbReference type="UniPathway" id="UPA00061">
    <property type="reaction ID" value="UER00516"/>
</dbReference>
<dbReference type="Proteomes" id="UP000000593">
    <property type="component" value="Chromosome 1"/>
</dbReference>
<dbReference type="GO" id="GO:0008939">
    <property type="term" value="F:nicotinate-nucleotide-dimethylbenzimidazole phosphoribosyltransferase activity"/>
    <property type="evidence" value="ECO:0007669"/>
    <property type="project" value="UniProtKB-UniRule"/>
</dbReference>
<dbReference type="GO" id="GO:0009236">
    <property type="term" value="P:cobalamin biosynthetic process"/>
    <property type="evidence" value="ECO:0007669"/>
    <property type="project" value="UniProtKB-KW"/>
</dbReference>
<dbReference type="CDD" id="cd02439">
    <property type="entry name" value="DMB-PRT_CobT"/>
    <property type="match status" value="1"/>
</dbReference>
<dbReference type="FunFam" id="3.40.50.10210:FF:000001">
    <property type="entry name" value="Nicotinate-nucleotide--dimethylbenzimidazole phosphoribosyltransferase"/>
    <property type="match status" value="1"/>
</dbReference>
<dbReference type="Gene3D" id="1.10.1610.10">
    <property type="match status" value="1"/>
</dbReference>
<dbReference type="Gene3D" id="3.40.50.10210">
    <property type="match status" value="1"/>
</dbReference>
<dbReference type="HAMAP" id="MF_00230">
    <property type="entry name" value="CobT"/>
    <property type="match status" value="1"/>
</dbReference>
<dbReference type="InterPro" id="IPR003200">
    <property type="entry name" value="Nict_dMeBzImd_PRibTrfase"/>
</dbReference>
<dbReference type="InterPro" id="IPR017846">
    <property type="entry name" value="Nict_dMeBzImd_PRibTrfase_bact"/>
</dbReference>
<dbReference type="InterPro" id="IPR023195">
    <property type="entry name" value="Nict_dMeBzImd_PRibTrfase_N"/>
</dbReference>
<dbReference type="InterPro" id="IPR036087">
    <property type="entry name" value="Nict_dMeBzImd_PRibTrfase_sf"/>
</dbReference>
<dbReference type="NCBIfam" id="TIGR03160">
    <property type="entry name" value="cobT_DBIPRT"/>
    <property type="match status" value="1"/>
</dbReference>
<dbReference type="NCBIfam" id="NF000996">
    <property type="entry name" value="PRK00105.1"/>
    <property type="match status" value="1"/>
</dbReference>
<dbReference type="PANTHER" id="PTHR43463">
    <property type="entry name" value="NICOTINATE-NUCLEOTIDE--DIMETHYLBENZIMIDAZOLE PHOSPHORIBOSYLTRANSFERASE"/>
    <property type="match status" value="1"/>
</dbReference>
<dbReference type="PANTHER" id="PTHR43463:SF1">
    <property type="entry name" value="NICOTINATE-NUCLEOTIDE--DIMETHYLBENZIMIDAZOLE PHOSPHORIBOSYLTRANSFERASE"/>
    <property type="match status" value="1"/>
</dbReference>
<dbReference type="Pfam" id="PF02277">
    <property type="entry name" value="DBI_PRT"/>
    <property type="match status" value="1"/>
</dbReference>
<dbReference type="SUPFAM" id="SSF52733">
    <property type="entry name" value="Nicotinate mononucleotide:5,6-dimethylbenzimidazole phosphoribosyltransferase (CobT)"/>
    <property type="match status" value="1"/>
</dbReference>
<comment type="function">
    <text evidence="1">Catalyzes the synthesis of alpha-ribazole-5'-phosphate from nicotinate mononucleotide (NAMN) and 5,6-dimethylbenzimidazole (DMB).</text>
</comment>
<comment type="catalytic activity">
    <reaction evidence="1">
        <text>5,6-dimethylbenzimidazole + nicotinate beta-D-ribonucleotide = alpha-ribazole 5'-phosphate + nicotinate + H(+)</text>
        <dbReference type="Rhea" id="RHEA:11196"/>
        <dbReference type="ChEBI" id="CHEBI:15378"/>
        <dbReference type="ChEBI" id="CHEBI:15890"/>
        <dbReference type="ChEBI" id="CHEBI:32544"/>
        <dbReference type="ChEBI" id="CHEBI:57502"/>
        <dbReference type="ChEBI" id="CHEBI:57918"/>
        <dbReference type="EC" id="2.4.2.21"/>
    </reaction>
</comment>
<comment type="pathway">
    <text evidence="1">Nucleoside biosynthesis; alpha-ribazole biosynthesis; alpha-ribazole from 5,6-dimethylbenzimidazole: step 1/2.</text>
</comment>
<comment type="similarity">
    <text evidence="1">Belongs to the CobT family.</text>
</comment>
<proteinExistence type="inferred from homology"/>